<sequence length="212" mass="23505">MPGRFELKPTLEKVWHAPDNFRFMDPLPPMHRRGIIIAAIVLVVGFLLPSDDTPNAPVVTREAQLDIQSQSQPPTEEQLRAQLVTPQNDPDQVAPVAPEPIQEGQPEEQPQTTQTQPFQPDSGIDNQWRSYRVEPGKTMAQLFRDHGLPATDVYAMAQVEGAGKPLSNLQNGQMVKIRQNASGVVTGLTIDTGNNQQVLFTRQPDGSFIRAR</sequence>
<dbReference type="EMBL" id="U14003">
    <property type="protein sequence ID" value="AAA97102.1"/>
    <property type="status" value="ALT_INIT"/>
    <property type="molecule type" value="Genomic_DNA"/>
</dbReference>
<dbReference type="EMBL" id="U00096">
    <property type="protein sequence ID" value="AAC77163.2"/>
    <property type="molecule type" value="Genomic_DNA"/>
</dbReference>
<dbReference type="EMBL" id="AP009048">
    <property type="protein sequence ID" value="BAE78207.1"/>
    <property type="molecule type" value="Genomic_DNA"/>
</dbReference>
<dbReference type="PIR" id="S56431">
    <property type="entry name" value="S56431"/>
</dbReference>
<dbReference type="RefSeq" id="NP_418627.4">
    <property type="nucleotide sequence ID" value="NC_000913.3"/>
</dbReference>
<dbReference type="RefSeq" id="WP_001119478.1">
    <property type="nucleotide sequence ID" value="NZ_SSZK01000013.1"/>
</dbReference>
<dbReference type="SMR" id="P39310"/>
<dbReference type="BioGRID" id="4259638">
    <property type="interactions" value="403"/>
</dbReference>
<dbReference type="BioGRID" id="853019">
    <property type="interactions" value="2"/>
</dbReference>
<dbReference type="FunCoup" id="P39310">
    <property type="interactions" value="59"/>
</dbReference>
<dbReference type="IntAct" id="P39310">
    <property type="interactions" value="2"/>
</dbReference>
<dbReference type="STRING" id="511145.b4206"/>
<dbReference type="MoonProt" id="P39310"/>
<dbReference type="jPOST" id="P39310"/>
<dbReference type="PaxDb" id="511145-b4206"/>
<dbReference type="EnsemblBacteria" id="AAC77163">
    <property type="protein sequence ID" value="AAC77163"/>
    <property type="gene ID" value="b4206"/>
</dbReference>
<dbReference type="GeneID" id="93777615"/>
<dbReference type="GeneID" id="948727"/>
<dbReference type="KEGG" id="ecj:JW5745"/>
<dbReference type="KEGG" id="eco:b4206"/>
<dbReference type="KEGG" id="ecoc:C3026_22720"/>
<dbReference type="PATRIC" id="fig|1411691.4.peg.2495"/>
<dbReference type="EchoBASE" id="EB2395"/>
<dbReference type="eggNOG" id="COG3061">
    <property type="taxonomic scope" value="Bacteria"/>
</dbReference>
<dbReference type="HOGENOM" id="CLU_065360_1_0_6"/>
<dbReference type="InParanoid" id="P39310"/>
<dbReference type="OMA" id="QQWRTYR"/>
<dbReference type="OrthoDB" id="6398769at2"/>
<dbReference type="PhylomeDB" id="P39310"/>
<dbReference type="BioCyc" id="EcoCyc:G7864-MONOMER"/>
<dbReference type="PRO" id="PR:P39310"/>
<dbReference type="Proteomes" id="UP000000625">
    <property type="component" value="Chromosome"/>
</dbReference>
<dbReference type="GO" id="GO:0005886">
    <property type="term" value="C:plasma membrane"/>
    <property type="evidence" value="ECO:0007669"/>
    <property type="project" value="UniProtKB-SubCell"/>
</dbReference>
<dbReference type="GO" id="GO:0004222">
    <property type="term" value="F:metalloendopeptidase activity"/>
    <property type="evidence" value="ECO:0000318"/>
    <property type="project" value="GO_Central"/>
</dbReference>
<dbReference type="GO" id="GO:0042834">
    <property type="term" value="F:peptidoglycan binding"/>
    <property type="evidence" value="ECO:0007669"/>
    <property type="project" value="InterPro"/>
</dbReference>
<dbReference type="GO" id="GO:0043093">
    <property type="term" value="P:FtsZ-dependent cytokinesis"/>
    <property type="evidence" value="ECO:0000314"/>
    <property type="project" value="EcoCyc"/>
</dbReference>
<dbReference type="Gene3D" id="3.10.450.350">
    <property type="match status" value="1"/>
</dbReference>
<dbReference type="InterPro" id="IPR007340">
    <property type="entry name" value="LysM_Opacity-associatedA"/>
</dbReference>
<dbReference type="InterPro" id="IPR013731">
    <property type="entry name" value="OapA_N"/>
</dbReference>
<dbReference type="Pfam" id="PF04225">
    <property type="entry name" value="LysM_OapA"/>
    <property type="match status" value="1"/>
</dbReference>
<dbReference type="Pfam" id="PF08525">
    <property type="entry name" value="OapA_N"/>
    <property type="match status" value="1"/>
</dbReference>
<comment type="function">
    <text evidence="3">Cell division protein whose function is related to the generation of a transient cell wall structure. Function is linked to the late stages of cell division.</text>
</comment>
<comment type="subcellular location">
    <subcellularLocation>
        <location evidence="4">Cell inner membrane</location>
        <topology evidence="1">Single-pass membrane protein</topology>
    </subcellularLocation>
    <text evidence="3">Localizes to the septal ring prior to the onset of constriction and remains at the midcell throughout cytokinesis. Recruitment to the septal ring requires FtsZ, but not downstream division proteins.</text>
</comment>
<comment type="domain">
    <text evidence="3">The OapA domain binds peptidoglycan.</text>
</comment>
<comment type="disruption phenotype">
    <text evidence="3">Deletion of the gene has no discernible impact on morphology or cell size. YtfB/dedD double mutant grows as filamentous cells.</text>
</comment>
<comment type="miscellaneous">
    <text evidence="3">Overproduction causes cells to filament, most likely by disrupting FtsZ ring assembly.</text>
</comment>
<comment type="similarity">
    <text evidence="4">Belongs to the OapA family.</text>
</comment>
<comment type="sequence caution" evidence="4">
    <conflict type="erroneous initiation">
        <sequence resource="EMBL-CDS" id="AAA97102"/>
    </conflict>
    <text>Extended N-terminus.</text>
</comment>
<evidence type="ECO:0000255" key="1"/>
<evidence type="ECO:0000256" key="2">
    <source>
        <dbReference type="SAM" id="MobiDB-lite"/>
    </source>
</evidence>
<evidence type="ECO:0000269" key="3">
    <source>
    </source>
</evidence>
<evidence type="ECO:0000305" key="4"/>
<evidence type="ECO:0000305" key="5">
    <source>
    </source>
</evidence>
<feature type="chain" id="PRO_0000169822" description="Cell division protein YtfB">
    <location>
        <begin position="1"/>
        <end position="212"/>
    </location>
</feature>
<feature type="transmembrane region" description="Helical" evidence="1">
    <location>
        <begin position="34"/>
        <end position="50"/>
    </location>
</feature>
<feature type="region of interest" description="Disordered" evidence="2">
    <location>
        <begin position="88"/>
        <end position="127"/>
    </location>
</feature>
<feature type="region of interest" description="OapA" evidence="5">
    <location>
        <begin position="117"/>
        <end position="212"/>
    </location>
</feature>
<feature type="compositionally biased region" description="Low complexity" evidence="2">
    <location>
        <begin position="99"/>
        <end position="120"/>
    </location>
</feature>
<name>YTFB_ECOLI</name>
<gene>
    <name type="primary">ytfB</name>
    <name type="ordered locus">b4206</name>
    <name type="ordered locus">JW5745</name>
</gene>
<keyword id="KW-0131">Cell cycle</keyword>
<keyword id="KW-0132">Cell division</keyword>
<keyword id="KW-0997">Cell inner membrane</keyword>
<keyword id="KW-1003">Cell membrane</keyword>
<keyword id="KW-0472">Membrane</keyword>
<keyword id="KW-1185">Reference proteome</keyword>
<keyword id="KW-0812">Transmembrane</keyword>
<keyword id="KW-1133">Transmembrane helix</keyword>
<proteinExistence type="inferred from homology"/>
<reference key="1">
    <citation type="journal article" date="1995" name="Nucleic Acids Res.">
        <title>Analysis of the Escherichia coli genome VI: DNA sequence of the region from 92.8 through 100 minutes.</title>
        <authorList>
            <person name="Burland V.D."/>
            <person name="Plunkett G. III"/>
            <person name="Sofia H.J."/>
            <person name="Daniels D.L."/>
            <person name="Blattner F.R."/>
        </authorList>
    </citation>
    <scope>NUCLEOTIDE SEQUENCE [LARGE SCALE GENOMIC DNA]</scope>
    <source>
        <strain>K12 / MG1655 / ATCC 47076</strain>
    </source>
</reference>
<reference key="2">
    <citation type="journal article" date="1997" name="Science">
        <title>The complete genome sequence of Escherichia coli K-12.</title>
        <authorList>
            <person name="Blattner F.R."/>
            <person name="Plunkett G. III"/>
            <person name="Bloch C.A."/>
            <person name="Perna N.T."/>
            <person name="Burland V."/>
            <person name="Riley M."/>
            <person name="Collado-Vides J."/>
            <person name="Glasner J.D."/>
            <person name="Rode C.K."/>
            <person name="Mayhew G.F."/>
            <person name="Gregor J."/>
            <person name="Davis N.W."/>
            <person name="Kirkpatrick H.A."/>
            <person name="Goeden M.A."/>
            <person name="Rose D.J."/>
            <person name="Mau B."/>
            <person name="Shao Y."/>
        </authorList>
    </citation>
    <scope>NUCLEOTIDE SEQUENCE [LARGE SCALE GENOMIC DNA]</scope>
    <source>
        <strain>K12 / MG1655 / ATCC 47076</strain>
    </source>
</reference>
<reference key="3">
    <citation type="journal article" date="2006" name="Mol. Syst. Biol.">
        <title>Highly accurate genome sequences of Escherichia coli K-12 strains MG1655 and W3110.</title>
        <authorList>
            <person name="Hayashi K."/>
            <person name="Morooka N."/>
            <person name="Yamamoto Y."/>
            <person name="Fujita K."/>
            <person name="Isono K."/>
            <person name="Choi S."/>
            <person name="Ohtsubo E."/>
            <person name="Baba T."/>
            <person name="Wanner B.L."/>
            <person name="Mori H."/>
            <person name="Horiuchi T."/>
        </authorList>
    </citation>
    <scope>NUCLEOTIDE SEQUENCE [LARGE SCALE GENOMIC DNA]</scope>
    <source>
        <strain>K12 / W3110 / ATCC 27325 / DSM 5911</strain>
    </source>
</reference>
<reference key="4">
    <citation type="journal article" date="2018" name="J. Bacteriol.">
        <title>YtfB, an OapA domain-containing protein, is a new cell division protein in Escherichia coli.</title>
        <authorList>
            <person name="Jorgenson M.A."/>
            <person name="Young K.D."/>
        </authorList>
    </citation>
    <scope>FUNCTION</scope>
    <scope>SUBCELLULAR LOCATION</scope>
    <scope>DOMAIN</scope>
    <scope>DISRUPTION PHENOTYPE</scope>
    <scope>OVEREXPRESSION</scope>
</reference>
<organism>
    <name type="scientific">Escherichia coli (strain K12)</name>
    <dbReference type="NCBI Taxonomy" id="83333"/>
    <lineage>
        <taxon>Bacteria</taxon>
        <taxon>Pseudomonadati</taxon>
        <taxon>Pseudomonadota</taxon>
        <taxon>Gammaproteobacteria</taxon>
        <taxon>Enterobacterales</taxon>
        <taxon>Enterobacteriaceae</taxon>
        <taxon>Escherichia</taxon>
    </lineage>
</organism>
<accession>P39310</accession>
<accession>Q2M699</accession>
<protein>
    <recommendedName>
        <fullName evidence="4">Cell division protein YtfB</fullName>
    </recommendedName>
</protein>